<reference key="1">
    <citation type="submission" date="2006-12" db="EMBL/GenBank/DDBJ databases">
        <title>Complete sequence of chromosome 1 of Acidovorax sp. JS42.</title>
        <authorList>
            <person name="Copeland A."/>
            <person name="Lucas S."/>
            <person name="Lapidus A."/>
            <person name="Barry K."/>
            <person name="Detter J.C."/>
            <person name="Glavina del Rio T."/>
            <person name="Dalin E."/>
            <person name="Tice H."/>
            <person name="Pitluck S."/>
            <person name="Chertkov O."/>
            <person name="Brettin T."/>
            <person name="Bruce D."/>
            <person name="Han C."/>
            <person name="Tapia R."/>
            <person name="Gilna P."/>
            <person name="Schmutz J."/>
            <person name="Larimer F."/>
            <person name="Land M."/>
            <person name="Hauser L."/>
            <person name="Kyrpides N."/>
            <person name="Kim E."/>
            <person name="Stahl D."/>
            <person name="Richardson P."/>
        </authorList>
    </citation>
    <scope>NUCLEOTIDE SEQUENCE [LARGE SCALE GENOMIC DNA]</scope>
    <source>
        <strain>JS42</strain>
    </source>
</reference>
<proteinExistence type="inferred from homology"/>
<organism>
    <name type="scientific">Acidovorax sp. (strain JS42)</name>
    <dbReference type="NCBI Taxonomy" id="232721"/>
    <lineage>
        <taxon>Bacteria</taxon>
        <taxon>Pseudomonadati</taxon>
        <taxon>Pseudomonadota</taxon>
        <taxon>Betaproteobacteria</taxon>
        <taxon>Burkholderiales</taxon>
        <taxon>Comamonadaceae</taxon>
        <taxon>Acidovorax</taxon>
    </lineage>
</organism>
<name>NUSB_ACISJ</name>
<keyword id="KW-0694">RNA-binding</keyword>
<keyword id="KW-0804">Transcription</keyword>
<keyword id="KW-0889">Transcription antitermination</keyword>
<keyword id="KW-0805">Transcription regulation</keyword>
<dbReference type="EMBL" id="CP000539">
    <property type="protein sequence ID" value="ABM42909.1"/>
    <property type="molecule type" value="Genomic_DNA"/>
</dbReference>
<dbReference type="SMR" id="A1W9I4"/>
<dbReference type="STRING" id="232721.Ajs_2768"/>
<dbReference type="KEGG" id="ajs:Ajs_2768"/>
<dbReference type="eggNOG" id="COG0781">
    <property type="taxonomic scope" value="Bacteria"/>
</dbReference>
<dbReference type="HOGENOM" id="CLU_087843_4_1_4"/>
<dbReference type="Proteomes" id="UP000000645">
    <property type="component" value="Chromosome"/>
</dbReference>
<dbReference type="GO" id="GO:0005829">
    <property type="term" value="C:cytosol"/>
    <property type="evidence" value="ECO:0007669"/>
    <property type="project" value="TreeGrafter"/>
</dbReference>
<dbReference type="GO" id="GO:0003723">
    <property type="term" value="F:RNA binding"/>
    <property type="evidence" value="ECO:0007669"/>
    <property type="project" value="UniProtKB-UniRule"/>
</dbReference>
<dbReference type="GO" id="GO:0006353">
    <property type="term" value="P:DNA-templated transcription termination"/>
    <property type="evidence" value="ECO:0007669"/>
    <property type="project" value="UniProtKB-UniRule"/>
</dbReference>
<dbReference type="GO" id="GO:0031564">
    <property type="term" value="P:transcription antitermination"/>
    <property type="evidence" value="ECO:0007669"/>
    <property type="project" value="UniProtKB-KW"/>
</dbReference>
<dbReference type="Gene3D" id="1.10.940.10">
    <property type="entry name" value="NusB-like"/>
    <property type="match status" value="1"/>
</dbReference>
<dbReference type="HAMAP" id="MF_00073">
    <property type="entry name" value="NusB"/>
    <property type="match status" value="1"/>
</dbReference>
<dbReference type="InterPro" id="IPR035926">
    <property type="entry name" value="NusB-like_sf"/>
</dbReference>
<dbReference type="InterPro" id="IPR011605">
    <property type="entry name" value="NusB_fam"/>
</dbReference>
<dbReference type="InterPro" id="IPR006027">
    <property type="entry name" value="NusB_RsmB_TIM44"/>
</dbReference>
<dbReference type="NCBIfam" id="TIGR01951">
    <property type="entry name" value="nusB"/>
    <property type="match status" value="1"/>
</dbReference>
<dbReference type="PANTHER" id="PTHR11078:SF3">
    <property type="entry name" value="ANTITERMINATION NUSB DOMAIN-CONTAINING PROTEIN"/>
    <property type="match status" value="1"/>
</dbReference>
<dbReference type="PANTHER" id="PTHR11078">
    <property type="entry name" value="N UTILIZATION SUBSTANCE PROTEIN B-RELATED"/>
    <property type="match status" value="1"/>
</dbReference>
<dbReference type="Pfam" id="PF01029">
    <property type="entry name" value="NusB"/>
    <property type="match status" value="1"/>
</dbReference>
<dbReference type="SUPFAM" id="SSF48013">
    <property type="entry name" value="NusB-like"/>
    <property type="match status" value="1"/>
</dbReference>
<accession>A1W9I4</accession>
<sequence>MTDSTHPTPSARPPRQPRTGTTGTGARKAGSKSGRSRAREFALQALYQHLVGGNDATAIDVFTRDLSGFHKADAAHYDALLHGCITTAQYMDELIAPQLDRKMSEISPIEHAVMWIGVYEFQHCQDVPWRVVINECIELAKEFGGTDGHKYVNGVLNGLAPQLRATEVAADKAAARG</sequence>
<evidence type="ECO:0000255" key="1">
    <source>
        <dbReference type="HAMAP-Rule" id="MF_00073"/>
    </source>
</evidence>
<evidence type="ECO:0000256" key="2">
    <source>
        <dbReference type="SAM" id="MobiDB-lite"/>
    </source>
</evidence>
<feature type="chain" id="PRO_1000023701" description="Transcription antitermination protein NusB">
    <location>
        <begin position="1"/>
        <end position="177"/>
    </location>
</feature>
<feature type="region of interest" description="Disordered" evidence="2">
    <location>
        <begin position="1"/>
        <end position="35"/>
    </location>
</feature>
<feature type="compositionally biased region" description="Low complexity" evidence="2">
    <location>
        <begin position="17"/>
        <end position="28"/>
    </location>
</feature>
<comment type="function">
    <text evidence="1">Involved in transcription antitermination. Required for transcription of ribosomal RNA (rRNA) genes. Binds specifically to the boxA antiterminator sequence of the ribosomal RNA (rrn) operons.</text>
</comment>
<comment type="similarity">
    <text evidence="1">Belongs to the NusB family.</text>
</comment>
<gene>
    <name evidence="1" type="primary">nusB</name>
    <name type="ordered locus">Ajs_2768</name>
</gene>
<protein>
    <recommendedName>
        <fullName evidence="1">Transcription antitermination protein NusB</fullName>
    </recommendedName>
    <alternativeName>
        <fullName evidence="1">Antitermination factor NusB</fullName>
    </alternativeName>
</protein>